<name>HIP29_ARATH</name>
<organism>
    <name type="scientific">Arabidopsis thaliana</name>
    <name type="common">Mouse-ear cress</name>
    <dbReference type="NCBI Taxonomy" id="3702"/>
    <lineage>
        <taxon>Eukaryota</taxon>
        <taxon>Viridiplantae</taxon>
        <taxon>Streptophyta</taxon>
        <taxon>Embryophyta</taxon>
        <taxon>Tracheophyta</taxon>
        <taxon>Spermatophyta</taxon>
        <taxon>Magnoliopsida</taxon>
        <taxon>eudicotyledons</taxon>
        <taxon>Gunneridae</taxon>
        <taxon>Pentapetalae</taxon>
        <taxon>rosids</taxon>
        <taxon>malvids</taxon>
        <taxon>Brassicales</taxon>
        <taxon>Brassicaceae</taxon>
        <taxon>Camelineae</taxon>
        <taxon>Arabidopsis</taxon>
    </lineage>
</organism>
<proteinExistence type="inferred from homology"/>
<sequence length="141" mass="16462">MEVPMDCPGCENKVRKALEKMNGVHDVQIDIKQQRVTVTGSAEQKKVLKVARNVTKRDICLWSYPYHPESNGYNDRYFKKKFRKRINMSVNGEKVSSYNYHKHGYHGHEHGYYQERPYSGLINPSASSMFSEENPHFCSIM</sequence>
<accession>Q9LP41</accession>
<reference key="1">
    <citation type="journal article" date="2000" name="Nature">
        <title>Sequence and analysis of chromosome 1 of the plant Arabidopsis thaliana.</title>
        <authorList>
            <person name="Theologis A."/>
            <person name="Ecker J.R."/>
            <person name="Palm C.J."/>
            <person name="Federspiel N.A."/>
            <person name="Kaul S."/>
            <person name="White O."/>
            <person name="Alonso J."/>
            <person name="Altafi H."/>
            <person name="Araujo R."/>
            <person name="Bowman C.L."/>
            <person name="Brooks S.Y."/>
            <person name="Buehler E."/>
            <person name="Chan A."/>
            <person name="Chao Q."/>
            <person name="Chen H."/>
            <person name="Cheuk R.F."/>
            <person name="Chin C.W."/>
            <person name="Chung M.K."/>
            <person name="Conn L."/>
            <person name="Conway A.B."/>
            <person name="Conway A.R."/>
            <person name="Creasy T.H."/>
            <person name="Dewar K."/>
            <person name="Dunn P."/>
            <person name="Etgu P."/>
            <person name="Feldblyum T.V."/>
            <person name="Feng J.-D."/>
            <person name="Fong B."/>
            <person name="Fujii C.Y."/>
            <person name="Gill J.E."/>
            <person name="Goldsmith A.D."/>
            <person name="Haas B."/>
            <person name="Hansen N.F."/>
            <person name="Hughes B."/>
            <person name="Huizar L."/>
            <person name="Hunter J.L."/>
            <person name="Jenkins J."/>
            <person name="Johnson-Hopson C."/>
            <person name="Khan S."/>
            <person name="Khaykin E."/>
            <person name="Kim C.J."/>
            <person name="Koo H.L."/>
            <person name="Kremenetskaia I."/>
            <person name="Kurtz D.B."/>
            <person name="Kwan A."/>
            <person name="Lam B."/>
            <person name="Langin-Hooper S."/>
            <person name="Lee A."/>
            <person name="Lee J.M."/>
            <person name="Lenz C.A."/>
            <person name="Li J.H."/>
            <person name="Li Y.-P."/>
            <person name="Lin X."/>
            <person name="Liu S.X."/>
            <person name="Liu Z.A."/>
            <person name="Luros J.S."/>
            <person name="Maiti R."/>
            <person name="Marziali A."/>
            <person name="Militscher J."/>
            <person name="Miranda M."/>
            <person name="Nguyen M."/>
            <person name="Nierman W.C."/>
            <person name="Osborne B.I."/>
            <person name="Pai G."/>
            <person name="Peterson J."/>
            <person name="Pham P.K."/>
            <person name="Rizzo M."/>
            <person name="Rooney T."/>
            <person name="Rowley D."/>
            <person name="Sakano H."/>
            <person name="Salzberg S.L."/>
            <person name="Schwartz J.R."/>
            <person name="Shinn P."/>
            <person name="Southwick A.M."/>
            <person name="Sun H."/>
            <person name="Tallon L.J."/>
            <person name="Tambunga G."/>
            <person name="Toriumi M.J."/>
            <person name="Town C.D."/>
            <person name="Utterback T."/>
            <person name="Van Aken S."/>
            <person name="Vaysberg M."/>
            <person name="Vysotskaia V.S."/>
            <person name="Walker M."/>
            <person name="Wu D."/>
            <person name="Yu G."/>
            <person name="Fraser C.M."/>
            <person name="Venter J.C."/>
            <person name="Davis R.W."/>
        </authorList>
    </citation>
    <scope>NUCLEOTIDE SEQUENCE [LARGE SCALE GENOMIC DNA]</scope>
    <source>
        <strain>cv. Columbia</strain>
    </source>
</reference>
<reference key="2">
    <citation type="journal article" date="2017" name="Plant J.">
        <title>Araport11: a complete reannotation of the Arabidopsis thaliana reference genome.</title>
        <authorList>
            <person name="Cheng C.Y."/>
            <person name="Krishnakumar V."/>
            <person name="Chan A.P."/>
            <person name="Thibaud-Nissen F."/>
            <person name="Schobel S."/>
            <person name="Town C.D."/>
        </authorList>
    </citation>
    <scope>GENOME REANNOTATION</scope>
    <source>
        <strain>cv. Columbia</strain>
    </source>
</reference>
<reference key="3">
    <citation type="journal article" date="2010" name="Metallomics">
        <title>Metallochaperone-like genes in Arabidopsis thaliana.</title>
        <authorList>
            <person name="Tehseen M."/>
            <person name="Cairns N."/>
            <person name="Sherson S."/>
            <person name="Cobbett C.S."/>
        </authorList>
    </citation>
    <scope>GENE FAMILY</scope>
    <scope>NOMENCLATURE</scope>
</reference>
<reference key="4">
    <citation type="journal article" date="2013" name="FEBS J.">
        <title>Heavy metal-associated isoprenylated plant protein (HIPP): characterization of a family of proteins exclusive to plants.</title>
        <authorList>
            <person name="de Abreu-Neto J.B."/>
            <person name="Turchetto-Zolet A.C."/>
            <person name="de Oliveira L.F."/>
            <person name="Zanettini M.H."/>
            <person name="Margis-Pinheiro M."/>
        </authorList>
    </citation>
    <scope>GENE FAMILY</scope>
    <scope>NOMENCLATURE</scope>
</reference>
<keyword id="KW-0449">Lipoprotein</keyword>
<keyword id="KW-0479">Metal-binding</keyword>
<keyword id="KW-0488">Methylation</keyword>
<keyword id="KW-0636">Prenylation</keyword>
<keyword id="KW-1185">Reference proteome</keyword>
<protein>
    <recommendedName>
        <fullName evidence="4 5">Heavy metal-associated isoprenylated plant protein 29</fullName>
        <shortName evidence="4 5">AtHIP29</shortName>
    </recommendedName>
</protein>
<comment type="function">
    <text evidence="1">Heavy-metal-binding protein.</text>
</comment>
<comment type="similarity">
    <text evidence="6">Belongs to the HIPP family.</text>
</comment>
<feature type="chain" id="PRO_0000437835" description="Heavy metal-associated isoprenylated plant protein 29">
    <location>
        <begin position="1"/>
        <end position="138"/>
    </location>
</feature>
<feature type="propeptide" id="PRO_0000437836" description="Removed in mature form" evidence="6">
    <location>
        <begin position="139"/>
        <end position="141"/>
    </location>
</feature>
<feature type="domain" description="HMA" evidence="3">
    <location>
        <begin position="1"/>
        <end position="59"/>
    </location>
</feature>
<feature type="binding site" evidence="3">
    <location>
        <position position="7"/>
    </location>
    <ligand>
        <name>a metal cation</name>
        <dbReference type="ChEBI" id="CHEBI:25213"/>
    </ligand>
</feature>
<feature type="binding site" evidence="3">
    <location>
        <position position="10"/>
    </location>
    <ligand>
        <name>a metal cation</name>
        <dbReference type="ChEBI" id="CHEBI:25213"/>
    </ligand>
</feature>
<feature type="modified residue" description="Cysteine methyl ester" evidence="2">
    <location>
        <position position="138"/>
    </location>
</feature>
<feature type="lipid moiety-binding region" description="S-farnesyl cysteine" evidence="2">
    <location>
        <position position="138"/>
    </location>
</feature>
<evidence type="ECO:0000250" key="1">
    <source>
        <dbReference type="UniProtKB" id="Q9LZF1"/>
    </source>
</evidence>
<evidence type="ECO:0000250" key="2">
    <source>
        <dbReference type="UniProtKB" id="Q9SZN7"/>
    </source>
</evidence>
<evidence type="ECO:0000255" key="3">
    <source>
        <dbReference type="PROSITE-ProRule" id="PRU00280"/>
    </source>
</evidence>
<evidence type="ECO:0000303" key="4">
    <source>
    </source>
</evidence>
<evidence type="ECO:0000303" key="5">
    <source>
    </source>
</evidence>
<evidence type="ECO:0000305" key="6"/>
<evidence type="ECO:0000312" key="7">
    <source>
        <dbReference type="Araport" id="AT1G29100"/>
    </source>
</evidence>
<evidence type="ECO:0000312" key="8">
    <source>
        <dbReference type="EMBL" id="AAF88133.1"/>
    </source>
</evidence>
<gene>
    <name evidence="4 5" type="primary">HIPP29</name>
    <name evidence="7" type="ordered locus">At1g29100</name>
    <name evidence="8" type="ORF">F28N24.19</name>
</gene>
<dbReference type="EMBL" id="AC021043">
    <property type="protein sequence ID" value="AAF88133.1"/>
    <property type="molecule type" value="Genomic_DNA"/>
</dbReference>
<dbReference type="EMBL" id="CP002684">
    <property type="protein sequence ID" value="AEE31042.1"/>
    <property type="molecule type" value="Genomic_DNA"/>
</dbReference>
<dbReference type="PIR" id="E86413">
    <property type="entry name" value="E86413"/>
</dbReference>
<dbReference type="RefSeq" id="NP_174205.1">
    <property type="nucleotide sequence ID" value="NM_102651.2"/>
</dbReference>
<dbReference type="SMR" id="Q9LP41"/>
<dbReference type="FunCoup" id="Q9LP41">
    <property type="interactions" value="17"/>
</dbReference>
<dbReference type="STRING" id="3702.Q9LP41"/>
<dbReference type="PaxDb" id="3702-AT1G29100.1"/>
<dbReference type="EnsemblPlants" id="AT1G29100.1">
    <property type="protein sequence ID" value="AT1G29100.1"/>
    <property type="gene ID" value="AT1G29100"/>
</dbReference>
<dbReference type="GeneID" id="839785"/>
<dbReference type="Gramene" id="AT1G29100.1">
    <property type="protein sequence ID" value="AT1G29100.1"/>
    <property type="gene ID" value="AT1G29100"/>
</dbReference>
<dbReference type="KEGG" id="ath:AT1G29100"/>
<dbReference type="Araport" id="AT1G29100"/>
<dbReference type="TAIR" id="AT1G29100"/>
<dbReference type="eggNOG" id="KOG1603">
    <property type="taxonomic scope" value="Eukaryota"/>
</dbReference>
<dbReference type="HOGENOM" id="CLU_100095_0_1_1"/>
<dbReference type="InParanoid" id="Q9LP41"/>
<dbReference type="PhylomeDB" id="Q9LP41"/>
<dbReference type="PRO" id="PR:Q9LP41"/>
<dbReference type="Proteomes" id="UP000006548">
    <property type="component" value="Chromosome 1"/>
</dbReference>
<dbReference type="ExpressionAtlas" id="Q9LP41">
    <property type="expression patterns" value="baseline and differential"/>
</dbReference>
<dbReference type="GO" id="GO:0046872">
    <property type="term" value="F:metal ion binding"/>
    <property type="evidence" value="ECO:0007669"/>
    <property type="project" value="UniProtKB-KW"/>
</dbReference>
<dbReference type="CDD" id="cd00371">
    <property type="entry name" value="HMA"/>
    <property type="match status" value="1"/>
</dbReference>
<dbReference type="Gene3D" id="3.30.70.100">
    <property type="match status" value="1"/>
</dbReference>
<dbReference type="InterPro" id="IPR006121">
    <property type="entry name" value="HMA_dom"/>
</dbReference>
<dbReference type="InterPro" id="IPR036163">
    <property type="entry name" value="HMA_dom_sf"/>
</dbReference>
<dbReference type="PANTHER" id="PTHR22814">
    <property type="entry name" value="COPPER TRANSPORT PROTEIN ATOX1-RELATED"/>
    <property type="match status" value="1"/>
</dbReference>
<dbReference type="PANTHER" id="PTHR22814:SF312">
    <property type="entry name" value="HEAVY METAL-ASSOCIATED ISOPRENYLATED PLANT PROTEIN 29"/>
    <property type="match status" value="1"/>
</dbReference>
<dbReference type="Pfam" id="PF00403">
    <property type="entry name" value="HMA"/>
    <property type="match status" value="1"/>
</dbReference>
<dbReference type="SUPFAM" id="SSF55008">
    <property type="entry name" value="HMA, heavy metal-associated domain"/>
    <property type="match status" value="1"/>
</dbReference>
<dbReference type="PROSITE" id="PS50846">
    <property type="entry name" value="HMA_2"/>
    <property type="match status" value="1"/>
</dbReference>